<sequence>MQKLIIHGGKPLEGSINISGAKNAVLPIMAASILTNKLHITNVPKLTDVSTMKDLLRNHGACIRIIEHTDEFELIINTTNINKFTADYEIVRKMRASIWVLGPLLTKYGKAKVSLPGGCAIGARQVDLHIAVLKSMGAEIEIEDGYINASSKGRLKGTHFIFDKVSVGATINAILAAVLAKGETVLFNCGREPEIVDLCYCLIKMGADILGVGSSTITIKGKDCLNETSYKVLSDRIEAGTYMFAAAITKGDVKICGIDYNIIENIALKLIETGIKVVQINNGVQVTYKGKLNSVDLETNPYPGFATDLQAQFMSLMSISSGVSMITENIFENRFMHVPELCRMGADIVVRGNKAVVRGVEMLKGAEVMASDLRASVSLILAGLSTNSKTVLHRIYHLDRGFQDLEKKLSNCGANIKRV</sequence>
<comment type="function">
    <text evidence="1">Cell wall formation. Adds enolpyruvyl to UDP-N-acetylglucosamine.</text>
</comment>
<comment type="catalytic activity">
    <reaction evidence="1">
        <text>phosphoenolpyruvate + UDP-N-acetyl-alpha-D-glucosamine = UDP-N-acetyl-3-O-(1-carboxyvinyl)-alpha-D-glucosamine + phosphate</text>
        <dbReference type="Rhea" id="RHEA:18681"/>
        <dbReference type="ChEBI" id="CHEBI:43474"/>
        <dbReference type="ChEBI" id="CHEBI:57705"/>
        <dbReference type="ChEBI" id="CHEBI:58702"/>
        <dbReference type="ChEBI" id="CHEBI:68483"/>
        <dbReference type="EC" id="2.5.1.7"/>
    </reaction>
</comment>
<comment type="pathway">
    <text evidence="1">Cell wall biogenesis; peptidoglycan biosynthesis.</text>
</comment>
<comment type="subcellular location">
    <subcellularLocation>
        <location evidence="1">Cytoplasm</location>
    </subcellularLocation>
</comment>
<comment type="similarity">
    <text evidence="1">Belongs to the EPSP synthase family. MurA subfamily.</text>
</comment>
<keyword id="KW-0131">Cell cycle</keyword>
<keyword id="KW-0132">Cell division</keyword>
<keyword id="KW-0133">Cell shape</keyword>
<keyword id="KW-0961">Cell wall biogenesis/degradation</keyword>
<keyword id="KW-0963">Cytoplasm</keyword>
<keyword id="KW-0573">Peptidoglycan synthesis</keyword>
<keyword id="KW-0670">Pyruvate</keyword>
<keyword id="KW-1185">Reference proteome</keyword>
<keyword id="KW-0808">Transferase</keyword>
<accession>Q9ZCX3</accession>
<name>MURA_RICPR</name>
<dbReference type="EC" id="2.5.1.7" evidence="1"/>
<dbReference type="EMBL" id="AJ235272">
    <property type="protein sequence ID" value="CAA15026.1"/>
    <property type="molecule type" value="Genomic_DNA"/>
</dbReference>
<dbReference type="PIR" id="H71662">
    <property type="entry name" value="H71662"/>
</dbReference>
<dbReference type="RefSeq" id="NP_220950.1">
    <property type="nucleotide sequence ID" value="NC_000963.1"/>
</dbReference>
<dbReference type="RefSeq" id="WP_004597894.1">
    <property type="nucleotide sequence ID" value="NC_000963.1"/>
</dbReference>
<dbReference type="SMR" id="Q9ZCX3"/>
<dbReference type="STRING" id="272947.gene:17555659"/>
<dbReference type="EnsemblBacteria" id="CAA15026">
    <property type="protein sequence ID" value="CAA15026"/>
    <property type="gene ID" value="CAA15026"/>
</dbReference>
<dbReference type="GeneID" id="57569705"/>
<dbReference type="KEGG" id="rpr:RP579"/>
<dbReference type="PATRIC" id="fig|272947.5.peg.596"/>
<dbReference type="eggNOG" id="COG0766">
    <property type="taxonomic scope" value="Bacteria"/>
</dbReference>
<dbReference type="HOGENOM" id="CLU_027387_0_0_5"/>
<dbReference type="OrthoDB" id="9803760at2"/>
<dbReference type="UniPathway" id="UPA00219"/>
<dbReference type="Proteomes" id="UP000002480">
    <property type="component" value="Chromosome"/>
</dbReference>
<dbReference type="GO" id="GO:0005737">
    <property type="term" value="C:cytoplasm"/>
    <property type="evidence" value="ECO:0007669"/>
    <property type="project" value="UniProtKB-SubCell"/>
</dbReference>
<dbReference type="GO" id="GO:0008760">
    <property type="term" value="F:UDP-N-acetylglucosamine 1-carboxyvinyltransferase activity"/>
    <property type="evidence" value="ECO:0007669"/>
    <property type="project" value="UniProtKB-UniRule"/>
</dbReference>
<dbReference type="GO" id="GO:0051301">
    <property type="term" value="P:cell division"/>
    <property type="evidence" value="ECO:0007669"/>
    <property type="project" value="UniProtKB-KW"/>
</dbReference>
<dbReference type="GO" id="GO:0071555">
    <property type="term" value="P:cell wall organization"/>
    <property type="evidence" value="ECO:0007669"/>
    <property type="project" value="UniProtKB-KW"/>
</dbReference>
<dbReference type="GO" id="GO:0009252">
    <property type="term" value="P:peptidoglycan biosynthetic process"/>
    <property type="evidence" value="ECO:0007669"/>
    <property type="project" value="UniProtKB-UniRule"/>
</dbReference>
<dbReference type="GO" id="GO:0008360">
    <property type="term" value="P:regulation of cell shape"/>
    <property type="evidence" value="ECO:0007669"/>
    <property type="project" value="UniProtKB-KW"/>
</dbReference>
<dbReference type="GO" id="GO:0019277">
    <property type="term" value="P:UDP-N-acetylgalactosamine biosynthetic process"/>
    <property type="evidence" value="ECO:0007669"/>
    <property type="project" value="InterPro"/>
</dbReference>
<dbReference type="CDD" id="cd01555">
    <property type="entry name" value="UdpNAET"/>
    <property type="match status" value="1"/>
</dbReference>
<dbReference type="FunFam" id="3.65.10.10:FF:000001">
    <property type="entry name" value="UDP-N-acetylglucosamine 1-carboxyvinyltransferase"/>
    <property type="match status" value="1"/>
</dbReference>
<dbReference type="Gene3D" id="3.65.10.10">
    <property type="entry name" value="Enolpyruvate transferase domain"/>
    <property type="match status" value="2"/>
</dbReference>
<dbReference type="HAMAP" id="MF_00111">
    <property type="entry name" value="MurA"/>
    <property type="match status" value="1"/>
</dbReference>
<dbReference type="InterPro" id="IPR001986">
    <property type="entry name" value="Enolpyruvate_Tfrase_dom"/>
</dbReference>
<dbReference type="InterPro" id="IPR036968">
    <property type="entry name" value="Enolpyruvate_Tfrase_sf"/>
</dbReference>
<dbReference type="InterPro" id="IPR050068">
    <property type="entry name" value="MurA_subfamily"/>
</dbReference>
<dbReference type="InterPro" id="IPR013792">
    <property type="entry name" value="RNA3'P_cycl/enolpyr_Trfase_a/b"/>
</dbReference>
<dbReference type="InterPro" id="IPR005750">
    <property type="entry name" value="UDP_GlcNAc_COvinyl_MurA"/>
</dbReference>
<dbReference type="NCBIfam" id="TIGR01072">
    <property type="entry name" value="murA"/>
    <property type="match status" value="1"/>
</dbReference>
<dbReference type="NCBIfam" id="NF006873">
    <property type="entry name" value="PRK09369.1"/>
    <property type="match status" value="1"/>
</dbReference>
<dbReference type="PANTHER" id="PTHR43783">
    <property type="entry name" value="UDP-N-ACETYLGLUCOSAMINE 1-CARBOXYVINYLTRANSFERASE"/>
    <property type="match status" value="1"/>
</dbReference>
<dbReference type="PANTHER" id="PTHR43783:SF1">
    <property type="entry name" value="UDP-N-ACETYLGLUCOSAMINE 1-CARBOXYVINYLTRANSFERASE"/>
    <property type="match status" value="1"/>
</dbReference>
<dbReference type="Pfam" id="PF00275">
    <property type="entry name" value="EPSP_synthase"/>
    <property type="match status" value="1"/>
</dbReference>
<dbReference type="SUPFAM" id="SSF55205">
    <property type="entry name" value="EPT/RTPC-like"/>
    <property type="match status" value="1"/>
</dbReference>
<evidence type="ECO:0000255" key="1">
    <source>
        <dbReference type="HAMAP-Rule" id="MF_00111"/>
    </source>
</evidence>
<proteinExistence type="inferred from homology"/>
<organism>
    <name type="scientific">Rickettsia prowazekii (strain Madrid E)</name>
    <dbReference type="NCBI Taxonomy" id="272947"/>
    <lineage>
        <taxon>Bacteria</taxon>
        <taxon>Pseudomonadati</taxon>
        <taxon>Pseudomonadota</taxon>
        <taxon>Alphaproteobacteria</taxon>
        <taxon>Rickettsiales</taxon>
        <taxon>Rickettsiaceae</taxon>
        <taxon>Rickettsieae</taxon>
        <taxon>Rickettsia</taxon>
        <taxon>typhus group</taxon>
    </lineage>
</organism>
<protein>
    <recommendedName>
        <fullName evidence="1">UDP-N-acetylglucosamine 1-carboxyvinyltransferase</fullName>
        <ecNumber evidence="1">2.5.1.7</ecNumber>
    </recommendedName>
    <alternativeName>
        <fullName evidence="1">Enoylpyruvate transferase</fullName>
    </alternativeName>
    <alternativeName>
        <fullName evidence="1">UDP-N-acetylglucosamine enolpyruvyl transferase</fullName>
        <shortName evidence="1">EPT</shortName>
    </alternativeName>
</protein>
<reference key="1">
    <citation type="journal article" date="1998" name="Nature">
        <title>The genome sequence of Rickettsia prowazekii and the origin of mitochondria.</title>
        <authorList>
            <person name="Andersson S.G.E."/>
            <person name="Zomorodipour A."/>
            <person name="Andersson J.O."/>
            <person name="Sicheritz-Ponten T."/>
            <person name="Alsmark U.C.M."/>
            <person name="Podowski R.M."/>
            <person name="Naeslund A.K."/>
            <person name="Eriksson A.-S."/>
            <person name="Winkler H.H."/>
            <person name="Kurland C.G."/>
        </authorList>
    </citation>
    <scope>NUCLEOTIDE SEQUENCE [LARGE SCALE GENOMIC DNA]</scope>
    <source>
        <strain>Madrid E</strain>
    </source>
</reference>
<gene>
    <name evidence="1" type="primary">murA</name>
    <name type="ordered locus">RP579</name>
</gene>
<feature type="chain" id="PRO_0000178910" description="UDP-N-acetylglucosamine 1-carboxyvinyltransferase">
    <location>
        <begin position="1"/>
        <end position="419"/>
    </location>
</feature>
<feature type="active site" description="Proton donor" evidence="1">
    <location>
        <position position="119"/>
    </location>
</feature>
<feature type="binding site" evidence="1">
    <location>
        <begin position="22"/>
        <end position="23"/>
    </location>
    <ligand>
        <name>phosphoenolpyruvate</name>
        <dbReference type="ChEBI" id="CHEBI:58702"/>
    </ligand>
</feature>
<feature type="binding site" evidence="1">
    <location>
        <position position="95"/>
    </location>
    <ligand>
        <name>UDP-N-acetyl-alpha-D-glucosamine</name>
        <dbReference type="ChEBI" id="CHEBI:57705"/>
    </ligand>
</feature>
<feature type="binding site" evidence="1">
    <location>
        <begin position="164"/>
        <end position="167"/>
    </location>
    <ligand>
        <name>UDP-N-acetyl-alpha-D-glucosamine</name>
        <dbReference type="ChEBI" id="CHEBI:57705"/>
    </ligand>
</feature>
<feature type="binding site" evidence="1">
    <location>
        <position position="308"/>
    </location>
    <ligand>
        <name>UDP-N-acetyl-alpha-D-glucosamine</name>
        <dbReference type="ChEBI" id="CHEBI:57705"/>
    </ligand>
</feature>
<feature type="binding site" evidence="1">
    <location>
        <position position="330"/>
    </location>
    <ligand>
        <name>UDP-N-acetyl-alpha-D-glucosamine</name>
        <dbReference type="ChEBI" id="CHEBI:57705"/>
    </ligand>
</feature>
<feature type="modified residue" description="2-(S-cysteinyl)pyruvic acid O-phosphothioketal" evidence="1">
    <location>
        <position position="119"/>
    </location>
</feature>